<sequence>MAHKKAGGSTRNGRDSEAKRLGVKRFGGESVLAGSIIVRQRGTKFHAGANVGCGRDHTLFAKADGKVKFEVKGPKNRKFISIEAE</sequence>
<evidence type="ECO:0000255" key="1">
    <source>
        <dbReference type="HAMAP-Rule" id="MF_00539"/>
    </source>
</evidence>
<evidence type="ECO:0000256" key="2">
    <source>
        <dbReference type="SAM" id="MobiDB-lite"/>
    </source>
</evidence>
<evidence type="ECO:0000305" key="3"/>
<proteinExistence type="inferred from homology"/>
<name>RL27_ECO45</name>
<dbReference type="EMBL" id="CU928161">
    <property type="protein sequence ID" value="CAR04795.1"/>
    <property type="molecule type" value="Genomic_DNA"/>
</dbReference>
<dbReference type="RefSeq" id="WP_000940595.1">
    <property type="nucleotide sequence ID" value="NC_011742.1"/>
</dbReference>
<dbReference type="EMDB" id="EMD-7970"/>
<dbReference type="EMDB" id="EMD-8826"/>
<dbReference type="EMDB" id="EMD-8829"/>
<dbReference type="SMR" id="B7MBV4"/>
<dbReference type="IntAct" id="B7MBV4">
    <property type="interactions" value="1"/>
</dbReference>
<dbReference type="GeneID" id="93778796"/>
<dbReference type="KEGG" id="ecz:ECS88_3567"/>
<dbReference type="HOGENOM" id="CLU_095424_4_1_6"/>
<dbReference type="Proteomes" id="UP000000747">
    <property type="component" value="Chromosome"/>
</dbReference>
<dbReference type="GO" id="GO:0022625">
    <property type="term" value="C:cytosolic large ribosomal subunit"/>
    <property type="evidence" value="ECO:0007669"/>
    <property type="project" value="TreeGrafter"/>
</dbReference>
<dbReference type="GO" id="GO:0003735">
    <property type="term" value="F:structural constituent of ribosome"/>
    <property type="evidence" value="ECO:0007669"/>
    <property type="project" value="InterPro"/>
</dbReference>
<dbReference type="GO" id="GO:0006412">
    <property type="term" value="P:translation"/>
    <property type="evidence" value="ECO:0007669"/>
    <property type="project" value="UniProtKB-UniRule"/>
</dbReference>
<dbReference type="FunFam" id="2.40.50.100:FF:000001">
    <property type="entry name" value="50S ribosomal protein L27"/>
    <property type="match status" value="1"/>
</dbReference>
<dbReference type="Gene3D" id="2.40.50.100">
    <property type="match status" value="1"/>
</dbReference>
<dbReference type="HAMAP" id="MF_00539">
    <property type="entry name" value="Ribosomal_bL27"/>
    <property type="match status" value="1"/>
</dbReference>
<dbReference type="InterPro" id="IPR001684">
    <property type="entry name" value="Ribosomal_bL27"/>
</dbReference>
<dbReference type="InterPro" id="IPR018261">
    <property type="entry name" value="Ribosomal_bL27_CS"/>
</dbReference>
<dbReference type="NCBIfam" id="TIGR00062">
    <property type="entry name" value="L27"/>
    <property type="match status" value="1"/>
</dbReference>
<dbReference type="PANTHER" id="PTHR15893:SF0">
    <property type="entry name" value="LARGE RIBOSOMAL SUBUNIT PROTEIN BL27M"/>
    <property type="match status" value="1"/>
</dbReference>
<dbReference type="PANTHER" id="PTHR15893">
    <property type="entry name" value="RIBOSOMAL PROTEIN L27"/>
    <property type="match status" value="1"/>
</dbReference>
<dbReference type="Pfam" id="PF01016">
    <property type="entry name" value="Ribosomal_L27"/>
    <property type="match status" value="1"/>
</dbReference>
<dbReference type="PRINTS" id="PR00063">
    <property type="entry name" value="RIBOSOMALL27"/>
</dbReference>
<dbReference type="SUPFAM" id="SSF110324">
    <property type="entry name" value="Ribosomal L27 protein-like"/>
    <property type="match status" value="1"/>
</dbReference>
<dbReference type="PROSITE" id="PS00831">
    <property type="entry name" value="RIBOSOMAL_L27"/>
    <property type="match status" value="1"/>
</dbReference>
<gene>
    <name evidence="1" type="primary">rpmA</name>
    <name type="ordered locus">ECS88_3567</name>
</gene>
<accession>B7MBV4</accession>
<feature type="chain" id="PRO_1000128741" description="Large ribosomal subunit protein bL27">
    <location>
        <begin position="1"/>
        <end position="85"/>
    </location>
</feature>
<feature type="region of interest" description="Disordered" evidence="2">
    <location>
        <begin position="1"/>
        <end position="20"/>
    </location>
</feature>
<organism>
    <name type="scientific">Escherichia coli O45:K1 (strain S88 / ExPEC)</name>
    <dbReference type="NCBI Taxonomy" id="585035"/>
    <lineage>
        <taxon>Bacteria</taxon>
        <taxon>Pseudomonadati</taxon>
        <taxon>Pseudomonadota</taxon>
        <taxon>Gammaproteobacteria</taxon>
        <taxon>Enterobacterales</taxon>
        <taxon>Enterobacteriaceae</taxon>
        <taxon>Escherichia</taxon>
    </lineage>
</organism>
<keyword id="KW-1185">Reference proteome</keyword>
<keyword id="KW-0687">Ribonucleoprotein</keyword>
<keyword id="KW-0689">Ribosomal protein</keyword>
<protein>
    <recommendedName>
        <fullName evidence="1">Large ribosomal subunit protein bL27</fullName>
    </recommendedName>
    <alternativeName>
        <fullName evidence="3">50S ribosomal protein L27</fullName>
    </alternativeName>
</protein>
<comment type="similarity">
    <text evidence="1">Belongs to the bacterial ribosomal protein bL27 family.</text>
</comment>
<reference key="1">
    <citation type="journal article" date="2009" name="PLoS Genet.">
        <title>Organised genome dynamics in the Escherichia coli species results in highly diverse adaptive paths.</title>
        <authorList>
            <person name="Touchon M."/>
            <person name="Hoede C."/>
            <person name="Tenaillon O."/>
            <person name="Barbe V."/>
            <person name="Baeriswyl S."/>
            <person name="Bidet P."/>
            <person name="Bingen E."/>
            <person name="Bonacorsi S."/>
            <person name="Bouchier C."/>
            <person name="Bouvet O."/>
            <person name="Calteau A."/>
            <person name="Chiapello H."/>
            <person name="Clermont O."/>
            <person name="Cruveiller S."/>
            <person name="Danchin A."/>
            <person name="Diard M."/>
            <person name="Dossat C."/>
            <person name="Karoui M.E."/>
            <person name="Frapy E."/>
            <person name="Garry L."/>
            <person name="Ghigo J.M."/>
            <person name="Gilles A.M."/>
            <person name="Johnson J."/>
            <person name="Le Bouguenec C."/>
            <person name="Lescat M."/>
            <person name="Mangenot S."/>
            <person name="Martinez-Jehanne V."/>
            <person name="Matic I."/>
            <person name="Nassif X."/>
            <person name="Oztas S."/>
            <person name="Petit M.A."/>
            <person name="Pichon C."/>
            <person name="Rouy Z."/>
            <person name="Ruf C.S."/>
            <person name="Schneider D."/>
            <person name="Tourret J."/>
            <person name="Vacherie B."/>
            <person name="Vallenet D."/>
            <person name="Medigue C."/>
            <person name="Rocha E.P.C."/>
            <person name="Denamur E."/>
        </authorList>
    </citation>
    <scope>NUCLEOTIDE SEQUENCE [LARGE SCALE GENOMIC DNA]</scope>
    <source>
        <strain>S88 / ExPEC</strain>
    </source>
</reference>